<feature type="chain" id="PRO_1000142994" description="Large ribosomal subunit protein uL16">
    <location>
        <begin position="1"/>
        <end position="137"/>
    </location>
</feature>
<comment type="function">
    <text evidence="1">Binds 23S rRNA and is also seen to make contacts with the A and possibly P site tRNAs.</text>
</comment>
<comment type="subunit">
    <text evidence="1">Part of the 50S ribosomal subunit.</text>
</comment>
<comment type="similarity">
    <text evidence="1">Belongs to the universal ribosomal protein uL16 family.</text>
</comment>
<gene>
    <name evidence="1" type="primary">rplP</name>
    <name type="ordered locus">Mext_2169</name>
</gene>
<accession>A9W4Q8</accession>
<sequence length="137" mass="15457">MLQPKKTKFRKQFKGRISGAAKGGFELNFGQFGLKCLEPERITARQIEAARRAITREMKRQGRVWIRVFPDLPVTAKPTEVRMGSGKGAPEYWAARVHPGRIMFEVDGVAEDIAREALRLGAAKLPVRTRVIQRIAD</sequence>
<keyword id="KW-0687">Ribonucleoprotein</keyword>
<keyword id="KW-0689">Ribosomal protein</keyword>
<keyword id="KW-0694">RNA-binding</keyword>
<keyword id="KW-0699">rRNA-binding</keyword>
<keyword id="KW-0820">tRNA-binding</keyword>
<reference key="1">
    <citation type="submission" date="2007-12" db="EMBL/GenBank/DDBJ databases">
        <title>Complete sequence of Methylobacterium extorquens PA1.</title>
        <authorList>
            <consortium name="US DOE Joint Genome Institute"/>
            <person name="Copeland A."/>
            <person name="Lucas S."/>
            <person name="Lapidus A."/>
            <person name="Barry K."/>
            <person name="Glavina del Rio T."/>
            <person name="Dalin E."/>
            <person name="Tice H."/>
            <person name="Pitluck S."/>
            <person name="Saunders E."/>
            <person name="Brettin T."/>
            <person name="Bruce D."/>
            <person name="Detter J.C."/>
            <person name="Han C."/>
            <person name="Schmutz J."/>
            <person name="Larimer F."/>
            <person name="Land M."/>
            <person name="Hauser L."/>
            <person name="Kyrpides N."/>
            <person name="Kim E."/>
            <person name="Marx C."/>
            <person name="Richardson P."/>
        </authorList>
    </citation>
    <scope>NUCLEOTIDE SEQUENCE [LARGE SCALE GENOMIC DNA]</scope>
    <source>
        <strain>PA1</strain>
    </source>
</reference>
<proteinExistence type="inferred from homology"/>
<organism>
    <name type="scientific">Methylorubrum extorquens (strain PA1)</name>
    <name type="common">Methylobacterium extorquens</name>
    <dbReference type="NCBI Taxonomy" id="419610"/>
    <lineage>
        <taxon>Bacteria</taxon>
        <taxon>Pseudomonadati</taxon>
        <taxon>Pseudomonadota</taxon>
        <taxon>Alphaproteobacteria</taxon>
        <taxon>Hyphomicrobiales</taxon>
        <taxon>Methylobacteriaceae</taxon>
        <taxon>Methylorubrum</taxon>
    </lineage>
</organism>
<evidence type="ECO:0000255" key="1">
    <source>
        <dbReference type="HAMAP-Rule" id="MF_01342"/>
    </source>
</evidence>
<evidence type="ECO:0000305" key="2"/>
<dbReference type="EMBL" id="CP000908">
    <property type="protein sequence ID" value="ABY30564.1"/>
    <property type="molecule type" value="Genomic_DNA"/>
</dbReference>
<dbReference type="RefSeq" id="WP_003597105.1">
    <property type="nucleotide sequence ID" value="NC_010172.1"/>
</dbReference>
<dbReference type="SMR" id="A9W4Q8"/>
<dbReference type="GeneID" id="72989857"/>
<dbReference type="KEGG" id="mex:Mext_2169"/>
<dbReference type="eggNOG" id="COG0197">
    <property type="taxonomic scope" value="Bacteria"/>
</dbReference>
<dbReference type="HOGENOM" id="CLU_078858_2_1_5"/>
<dbReference type="BioCyc" id="MEXT419610:MEXT_RS10950-MONOMER"/>
<dbReference type="GO" id="GO:0022625">
    <property type="term" value="C:cytosolic large ribosomal subunit"/>
    <property type="evidence" value="ECO:0007669"/>
    <property type="project" value="TreeGrafter"/>
</dbReference>
<dbReference type="GO" id="GO:0019843">
    <property type="term" value="F:rRNA binding"/>
    <property type="evidence" value="ECO:0007669"/>
    <property type="project" value="UniProtKB-UniRule"/>
</dbReference>
<dbReference type="GO" id="GO:0003735">
    <property type="term" value="F:structural constituent of ribosome"/>
    <property type="evidence" value="ECO:0007669"/>
    <property type="project" value="InterPro"/>
</dbReference>
<dbReference type="GO" id="GO:0000049">
    <property type="term" value="F:tRNA binding"/>
    <property type="evidence" value="ECO:0007669"/>
    <property type="project" value="UniProtKB-KW"/>
</dbReference>
<dbReference type="GO" id="GO:0006412">
    <property type="term" value="P:translation"/>
    <property type="evidence" value="ECO:0007669"/>
    <property type="project" value="UniProtKB-UniRule"/>
</dbReference>
<dbReference type="CDD" id="cd01433">
    <property type="entry name" value="Ribosomal_L16_L10e"/>
    <property type="match status" value="1"/>
</dbReference>
<dbReference type="FunFam" id="3.90.1170.10:FF:000001">
    <property type="entry name" value="50S ribosomal protein L16"/>
    <property type="match status" value="1"/>
</dbReference>
<dbReference type="Gene3D" id="3.90.1170.10">
    <property type="entry name" value="Ribosomal protein L10e/L16"/>
    <property type="match status" value="1"/>
</dbReference>
<dbReference type="HAMAP" id="MF_01342">
    <property type="entry name" value="Ribosomal_uL16"/>
    <property type="match status" value="1"/>
</dbReference>
<dbReference type="InterPro" id="IPR047873">
    <property type="entry name" value="Ribosomal_uL16"/>
</dbReference>
<dbReference type="InterPro" id="IPR000114">
    <property type="entry name" value="Ribosomal_uL16_bact-type"/>
</dbReference>
<dbReference type="InterPro" id="IPR020798">
    <property type="entry name" value="Ribosomal_uL16_CS"/>
</dbReference>
<dbReference type="InterPro" id="IPR016180">
    <property type="entry name" value="Ribosomal_uL16_dom"/>
</dbReference>
<dbReference type="InterPro" id="IPR036920">
    <property type="entry name" value="Ribosomal_uL16_sf"/>
</dbReference>
<dbReference type="NCBIfam" id="TIGR01164">
    <property type="entry name" value="rplP_bact"/>
    <property type="match status" value="1"/>
</dbReference>
<dbReference type="PANTHER" id="PTHR12220">
    <property type="entry name" value="50S/60S RIBOSOMAL PROTEIN L16"/>
    <property type="match status" value="1"/>
</dbReference>
<dbReference type="PANTHER" id="PTHR12220:SF13">
    <property type="entry name" value="LARGE RIBOSOMAL SUBUNIT PROTEIN UL16M"/>
    <property type="match status" value="1"/>
</dbReference>
<dbReference type="Pfam" id="PF00252">
    <property type="entry name" value="Ribosomal_L16"/>
    <property type="match status" value="1"/>
</dbReference>
<dbReference type="PRINTS" id="PR00060">
    <property type="entry name" value="RIBOSOMALL16"/>
</dbReference>
<dbReference type="SUPFAM" id="SSF54686">
    <property type="entry name" value="Ribosomal protein L16p/L10e"/>
    <property type="match status" value="1"/>
</dbReference>
<dbReference type="PROSITE" id="PS00586">
    <property type="entry name" value="RIBOSOMAL_L16_1"/>
    <property type="match status" value="1"/>
</dbReference>
<dbReference type="PROSITE" id="PS00701">
    <property type="entry name" value="RIBOSOMAL_L16_2"/>
    <property type="match status" value="1"/>
</dbReference>
<protein>
    <recommendedName>
        <fullName evidence="1">Large ribosomal subunit protein uL16</fullName>
    </recommendedName>
    <alternativeName>
        <fullName evidence="2">50S ribosomal protein L16</fullName>
    </alternativeName>
</protein>
<name>RL16_METEP</name>